<reference key="1">
    <citation type="journal article" date="2009" name="J. Bacteriol.">
        <title>Genome sequence of Azotobacter vinelandii, an obligate aerobe specialized to support diverse anaerobic metabolic processes.</title>
        <authorList>
            <person name="Setubal J.C."/>
            <person name="Dos Santos P."/>
            <person name="Goldman B.S."/>
            <person name="Ertesvaag H."/>
            <person name="Espin G."/>
            <person name="Rubio L.M."/>
            <person name="Valla S."/>
            <person name="Almeida N.F."/>
            <person name="Balasubramanian D."/>
            <person name="Cromes L."/>
            <person name="Curatti L."/>
            <person name="Du Z."/>
            <person name="Godsy E."/>
            <person name="Goodner B."/>
            <person name="Hellner-Burris K."/>
            <person name="Hernandez J.A."/>
            <person name="Houmiel K."/>
            <person name="Imperial J."/>
            <person name="Kennedy C."/>
            <person name="Larson T.J."/>
            <person name="Latreille P."/>
            <person name="Ligon L.S."/>
            <person name="Lu J."/>
            <person name="Maerk M."/>
            <person name="Miller N.M."/>
            <person name="Norton S."/>
            <person name="O'Carroll I.P."/>
            <person name="Paulsen I."/>
            <person name="Raulfs E.C."/>
            <person name="Roemer R."/>
            <person name="Rosser J."/>
            <person name="Segura D."/>
            <person name="Slater S."/>
            <person name="Stricklin S.L."/>
            <person name="Studholme D.J."/>
            <person name="Sun J."/>
            <person name="Viana C.J."/>
            <person name="Wallin E."/>
            <person name="Wang B."/>
            <person name="Wheeler C."/>
            <person name="Zhu H."/>
            <person name="Dean D.R."/>
            <person name="Dixon R."/>
            <person name="Wood D."/>
        </authorList>
    </citation>
    <scope>NUCLEOTIDE SEQUENCE [LARGE SCALE GENOMIC DNA]</scope>
    <source>
        <strain>DJ / ATCC BAA-1303</strain>
    </source>
</reference>
<proteinExistence type="inferred from homology"/>
<keyword id="KW-0997">Cell inner membrane</keyword>
<keyword id="KW-1003">Cell membrane</keyword>
<keyword id="KW-0285">Flavoprotein</keyword>
<keyword id="KW-0288">FMN</keyword>
<keyword id="KW-0406">Ion transport</keyword>
<keyword id="KW-0472">Membrane</keyword>
<keyword id="KW-0520">NAD</keyword>
<keyword id="KW-0597">Phosphoprotein</keyword>
<keyword id="KW-0915">Sodium</keyword>
<keyword id="KW-0739">Sodium transport</keyword>
<keyword id="KW-1278">Translocase</keyword>
<keyword id="KW-0812">Transmembrane</keyword>
<keyword id="KW-1133">Transmembrane helix</keyword>
<keyword id="KW-0813">Transport</keyword>
<keyword id="KW-0830">Ubiquinone</keyword>
<organism>
    <name type="scientific">Azotobacter vinelandii (strain DJ / ATCC BAA-1303)</name>
    <dbReference type="NCBI Taxonomy" id="322710"/>
    <lineage>
        <taxon>Bacteria</taxon>
        <taxon>Pseudomonadati</taxon>
        <taxon>Pseudomonadota</taxon>
        <taxon>Gammaproteobacteria</taxon>
        <taxon>Pseudomonadales</taxon>
        <taxon>Pseudomonadaceae</taxon>
        <taxon>Azotobacter</taxon>
    </lineage>
</organism>
<feature type="chain" id="PRO_1000206063" description="Na(+)-translocating NADH-quinone reductase subunit B">
    <location>
        <begin position="1"/>
        <end position="403"/>
    </location>
</feature>
<feature type="transmembrane region" description="Helical" evidence="1">
    <location>
        <begin position="56"/>
        <end position="76"/>
    </location>
</feature>
<feature type="transmembrane region" description="Helical" evidence="1">
    <location>
        <begin position="121"/>
        <end position="141"/>
    </location>
</feature>
<feature type="transmembrane region" description="Helical" evidence="1">
    <location>
        <begin position="164"/>
        <end position="184"/>
    </location>
</feature>
<feature type="transmembrane region" description="Helical" evidence="1">
    <location>
        <begin position="195"/>
        <end position="212"/>
    </location>
</feature>
<feature type="transmembrane region" description="Helical" evidence="1">
    <location>
        <begin position="237"/>
        <end position="257"/>
    </location>
</feature>
<feature type="transmembrane region" description="Helical" evidence="1">
    <location>
        <begin position="265"/>
        <end position="285"/>
    </location>
</feature>
<feature type="transmembrane region" description="Helical" evidence="1">
    <location>
        <begin position="287"/>
        <end position="307"/>
    </location>
</feature>
<feature type="transmembrane region" description="Helical" evidence="1">
    <location>
        <begin position="312"/>
        <end position="332"/>
    </location>
</feature>
<feature type="transmembrane region" description="Helical" evidence="1">
    <location>
        <begin position="348"/>
        <end position="368"/>
    </location>
</feature>
<feature type="transmembrane region" description="Helical" evidence="1">
    <location>
        <begin position="371"/>
        <end position="391"/>
    </location>
</feature>
<feature type="modified residue" description="FMN phosphoryl threonine" evidence="1">
    <location>
        <position position="230"/>
    </location>
</feature>
<gene>
    <name evidence="1" type="primary">nqrB</name>
    <name type="ordered locus">Avin_14600</name>
</gene>
<dbReference type="EC" id="7.2.1.1" evidence="1"/>
<dbReference type="EMBL" id="CP001157">
    <property type="protein sequence ID" value="ACO77676.1"/>
    <property type="molecule type" value="Genomic_DNA"/>
</dbReference>
<dbReference type="RefSeq" id="WP_012700095.1">
    <property type="nucleotide sequence ID" value="NC_012560.1"/>
</dbReference>
<dbReference type="SMR" id="C1DR03"/>
<dbReference type="STRING" id="322710.Avin_14600"/>
<dbReference type="EnsemblBacteria" id="ACO77676">
    <property type="protein sequence ID" value="ACO77676"/>
    <property type="gene ID" value="Avin_14600"/>
</dbReference>
<dbReference type="GeneID" id="88184759"/>
<dbReference type="KEGG" id="avn:Avin_14600"/>
<dbReference type="eggNOG" id="COG1805">
    <property type="taxonomic scope" value="Bacteria"/>
</dbReference>
<dbReference type="HOGENOM" id="CLU_042020_1_1_6"/>
<dbReference type="OrthoDB" id="9776359at2"/>
<dbReference type="Proteomes" id="UP000002424">
    <property type="component" value="Chromosome"/>
</dbReference>
<dbReference type="GO" id="GO:0005886">
    <property type="term" value="C:plasma membrane"/>
    <property type="evidence" value="ECO:0007669"/>
    <property type="project" value="UniProtKB-SubCell"/>
</dbReference>
<dbReference type="GO" id="GO:0010181">
    <property type="term" value="F:FMN binding"/>
    <property type="evidence" value="ECO:0007669"/>
    <property type="project" value="InterPro"/>
</dbReference>
<dbReference type="GO" id="GO:0016655">
    <property type="term" value="F:oxidoreductase activity, acting on NAD(P)H, quinone or similar compound as acceptor"/>
    <property type="evidence" value="ECO:0007669"/>
    <property type="project" value="UniProtKB-UniRule"/>
</dbReference>
<dbReference type="GO" id="GO:0022904">
    <property type="term" value="P:respiratory electron transport chain"/>
    <property type="evidence" value="ECO:0007669"/>
    <property type="project" value="InterPro"/>
</dbReference>
<dbReference type="GO" id="GO:0006814">
    <property type="term" value="P:sodium ion transport"/>
    <property type="evidence" value="ECO:0007669"/>
    <property type="project" value="UniProtKB-UniRule"/>
</dbReference>
<dbReference type="GO" id="GO:0055085">
    <property type="term" value="P:transmembrane transport"/>
    <property type="evidence" value="ECO:0007669"/>
    <property type="project" value="InterPro"/>
</dbReference>
<dbReference type="HAMAP" id="MF_00426">
    <property type="entry name" value="NqrB"/>
    <property type="match status" value="1"/>
</dbReference>
<dbReference type="InterPro" id="IPR010966">
    <property type="entry name" value="NqrB"/>
</dbReference>
<dbReference type="InterPro" id="IPR004338">
    <property type="entry name" value="NqrB/RnfD"/>
</dbReference>
<dbReference type="NCBIfam" id="TIGR01937">
    <property type="entry name" value="nqrB"/>
    <property type="match status" value="1"/>
</dbReference>
<dbReference type="NCBIfam" id="NF003756">
    <property type="entry name" value="PRK05349.1"/>
    <property type="match status" value="1"/>
</dbReference>
<dbReference type="PANTHER" id="PTHR30578">
    <property type="entry name" value="ELECTRON TRANSPORT COMPLEX PROTEIN RNFD"/>
    <property type="match status" value="1"/>
</dbReference>
<dbReference type="PANTHER" id="PTHR30578:SF1">
    <property type="entry name" value="NA(+)-TRANSLOCATING NADH-QUINONE REDUCTASE SUBUNIT B"/>
    <property type="match status" value="1"/>
</dbReference>
<dbReference type="Pfam" id="PF03116">
    <property type="entry name" value="NQR2_RnfD_RnfE"/>
    <property type="match status" value="1"/>
</dbReference>
<dbReference type="PIRSF" id="PIRSF016055">
    <property type="entry name" value="NADH-UbQ_OxRdtase_B_su"/>
    <property type="match status" value="1"/>
</dbReference>
<name>NQRB_AZOVD</name>
<protein>
    <recommendedName>
        <fullName evidence="1">Na(+)-translocating NADH-quinone reductase subunit B</fullName>
        <shortName evidence="1">Na(+)-NQR subunit B</shortName>
        <shortName evidence="1">Na(+)-translocating NQR subunit B</shortName>
        <ecNumber evidence="1">7.2.1.1</ecNumber>
    </recommendedName>
    <alternativeName>
        <fullName evidence="1">NQR complex subunit B</fullName>
    </alternativeName>
    <alternativeName>
        <fullName evidence="1">NQR-1 subunit B</fullName>
    </alternativeName>
</protein>
<sequence>MVIRAFLDKIEHNFEKGGRFEKWYALYEAVDTFLYRPASVTKTTAHVRDGIDLKRMMILVWLCTFPAMFFGMWNTGYQANLIFAGNPELLAAQGGWRFALTGALAGFDPNSLWDCFVQGAAYFLPIYAVTFIVGGFWEVLFASVRKHEINEGFFVTSVLFSLTLPPSIPLWQVAMGISFGVVIGKEVFGGTGKNFLNPALVGRAFLFFAYPAQLSGDGVWTAVDGYAGATALSLAAAGGVEGVVSAGVSWMDAFLGIEQGSIGETSTLAILIGGAVLLLTKIAAWRIVAGVMVGMVVLSSLFNLIGSDTNPMFAMPWYWHLVAGGFAFGTLFMATDPVSASMTNTGKWAFGILIGVMVVLIRVVNPAFPEGMMLAILFGNLCAPLIDHFVVQANIKRRLARNV</sequence>
<evidence type="ECO:0000255" key="1">
    <source>
        <dbReference type="HAMAP-Rule" id="MF_00426"/>
    </source>
</evidence>
<accession>C1DR03</accession>
<comment type="function">
    <text evidence="1">NQR complex catalyzes the reduction of ubiquinone-1 to ubiquinol by two successive reactions, coupled with the transport of Na(+) ions from the cytoplasm to the periplasm. NqrA to NqrE are probably involved in the second step, the conversion of ubisemiquinone to ubiquinol.</text>
</comment>
<comment type="catalytic activity">
    <reaction evidence="1">
        <text>a ubiquinone + n Na(+)(in) + NADH + H(+) = a ubiquinol + n Na(+)(out) + NAD(+)</text>
        <dbReference type="Rhea" id="RHEA:47748"/>
        <dbReference type="Rhea" id="RHEA-COMP:9565"/>
        <dbReference type="Rhea" id="RHEA-COMP:9566"/>
        <dbReference type="ChEBI" id="CHEBI:15378"/>
        <dbReference type="ChEBI" id="CHEBI:16389"/>
        <dbReference type="ChEBI" id="CHEBI:17976"/>
        <dbReference type="ChEBI" id="CHEBI:29101"/>
        <dbReference type="ChEBI" id="CHEBI:57540"/>
        <dbReference type="ChEBI" id="CHEBI:57945"/>
        <dbReference type="EC" id="7.2.1.1"/>
    </reaction>
</comment>
<comment type="cofactor">
    <cofactor evidence="1">
        <name>FMN</name>
        <dbReference type="ChEBI" id="CHEBI:58210"/>
    </cofactor>
</comment>
<comment type="subunit">
    <text evidence="1">Composed of six subunits; NqrA, NqrB, NqrC, NqrD, NqrE and NqrF.</text>
</comment>
<comment type="subcellular location">
    <subcellularLocation>
        <location evidence="1">Cell inner membrane</location>
        <topology evidence="1">Multi-pass membrane protein</topology>
    </subcellularLocation>
</comment>
<comment type="similarity">
    <text evidence="1">Belongs to the NqrB/RnfD family.</text>
</comment>